<sequence length="645" mass="76388">MSDEDNNYDDFMLSDDEGMESIEMEEETDDEDKQNIEINEDNSQDDQDRGAARHKQHEQGTFEKHDRVEDICERIFEQGQALKEDERYKEARDLFLKIYYKEEFSSDESIERLMTWKFKSLIEILRLRALQLYFQKNGAQDLVLQILEDTATMSVFLQRIDFQIDGNIFELLSDTFEVLAPKWERVFLFDIEKVDRENMICKIDFQKNFMDQFQWILRKPGKDCKLQNLQRIIRKKIFIAVVWYQRLTMGNVFTPEISSQIEILVKDNECSSFEENNDLESVSMLLQYYILEYMNTARINNRRLFKKCIDFFEMLISKSLTFSQESGLMVILYTSKIVFILDSDSENDLSFALMRYYDRKEELKNMFLYILKHLEEMGKLRERDITSLFHKFILSGFIFTSMILEAISTDKINPFGFEQVKIALGSPIVNVLEDVYRCFAQLELRQLNASISLIPELSVVLSGIIQDIYYLAQTLKLWRKIARLYSCISISDIISMLQISDDNEMTRDDLLTILMRSIMKNRSVVYFKLDLTSDLVYFGDENKVMLPRCSKEEFRLMISPKDEETTEKARLIDFEYVNDVAIYNNPTRIRTKSSKEFFNTLRKSRETVKLPRVSNQSNEDTFLPSYMKFSNKYLELCKLASNNLE</sequence>
<dbReference type="EMBL" id="Z48149">
    <property type="protein sequence ID" value="CAA88143.1"/>
    <property type="molecule type" value="Genomic_DNA"/>
</dbReference>
<dbReference type="EMBL" id="Z74859">
    <property type="protein sequence ID" value="CAA99136.1"/>
    <property type="molecule type" value="Genomic_DNA"/>
</dbReference>
<dbReference type="EMBL" id="BK006948">
    <property type="protein sequence ID" value="DAA10666.1"/>
    <property type="molecule type" value="Genomic_DNA"/>
</dbReference>
<dbReference type="PIR" id="S51880">
    <property type="entry name" value="S51880"/>
</dbReference>
<dbReference type="RefSeq" id="NP_014524.1">
    <property type="nucleotide sequence ID" value="NM_001183371.1"/>
</dbReference>
<dbReference type="BioGRID" id="34283">
    <property type="interactions" value="68"/>
</dbReference>
<dbReference type="ComplexPortal" id="CPX-1894">
    <property type="entry name" value="COP9 signalosome complex"/>
</dbReference>
<dbReference type="DIP" id="DIP-4212N"/>
<dbReference type="FunCoup" id="Q12348">
    <property type="interactions" value="187"/>
</dbReference>
<dbReference type="IntAct" id="Q12348">
    <property type="interactions" value="11"/>
</dbReference>
<dbReference type="MINT" id="Q12348"/>
<dbReference type="STRING" id="4932.YOL117W"/>
<dbReference type="iPTMnet" id="Q12348"/>
<dbReference type="PaxDb" id="4932-YOL117W"/>
<dbReference type="PeptideAtlas" id="Q12348"/>
<dbReference type="PRIDE" id="Q12348"/>
<dbReference type="TopDownProteomics" id="Q12348"/>
<dbReference type="EnsemblFungi" id="YOL117W_mRNA">
    <property type="protein sequence ID" value="YOL117W"/>
    <property type="gene ID" value="YOL117W"/>
</dbReference>
<dbReference type="GeneID" id="854032"/>
<dbReference type="KEGG" id="sce:YOL117W"/>
<dbReference type="AGR" id="SGD:S000005477"/>
<dbReference type="SGD" id="S000005477">
    <property type="gene designation" value="RRI2"/>
</dbReference>
<dbReference type="VEuPathDB" id="FungiDB:YOL117W"/>
<dbReference type="eggNOG" id="ENOG502RXR9">
    <property type="taxonomic scope" value="Eukaryota"/>
</dbReference>
<dbReference type="HOGENOM" id="CLU_031729_0_0_1"/>
<dbReference type="InParanoid" id="Q12348"/>
<dbReference type="OMA" id="DFMMSDD"/>
<dbReference type="OrthoDB" id="4047547at2759"/>
<dbReference type="BioCyc" id="YEAST:G3O-33514-MONOMER"/>
<dbReference type="BioGRID-ORCS" id="854032">
    <property type="hits" value="0 hits in 10 CRISPR screens"/>
</dbReference>
<dbReference type="PRO" id="PR:Q12348"/>
<dbReference type="Proteomes" id="UP000002311">
    <property type="component" value="Chromosome XV"/>
</dbReference>
<dbReference type="RNAct" id="Q12348">
    <property type="molecule type" value="protein"/>
</dbReference>
<dbReference type="GO" id="GO:0008180">
    <property type="term" value="C:COP9 signalosome"/>
    <property type="evidence" value="ECO:0000314"/>
    <property type="project" value="SGD"/>
</dbReference>
<dbReference type="GO" id="GO:0005737">
    <property type="term" value="C:cytoplasm"/>
    <property type="evidence" value="ECO:0007669"/>
    <property type="project" value="UniProtKB-SubCell"/>
</dbReference>
<dbReference type="GO" id="GO:0005634">
    <property type="term" value="C:nucleus"/>
    <property type="evidence" value="ECO:0000303"/>
    <property type="project" value="ComplexPortal"/>
</dbReference>
<dbReference type="GO" id="GO:0000754">
    <property type="term" value="P:adaptation of signaling pathway by response to pheromone involved in conjugation with cellular fusion"/>
    <property type="evidence" value="ECO:0000303"/>
    <property type="project" value="ComplexPortal"/>
</dbReference>
<dbReference type="GO" id="GO:0071444">
    <property type="term" value="P:cellular response to pheromone"/>
    <property type="evidence" value="ECO:0000316"/>
    <property type="project" value="SGD"/>
</dbReference>
<dbReference type="GO" id="GO:0000747">
    <property type="term" value="P:conjugation with cellular fusion"/>
    <property type="evidence" value="ECO:0000316"/>
    <property type="project" value="SGD"/>
</dbReference>
<dbReference type="GO" id="GO:0000338">
    <property type="term" value="P:protein deneddylation"/>
    <property type="evidence" value="ECO:0000315"/>
    <property type="project" value="SGD"/>
</dbReference>
<dbReference type="GO" id="GO:2000434">
    <property type="term" value="P:regulation of protein neddylation"/>
    <property type="evidence" value="ECO:0000303"/>
    <property type="project" value="ComplexPortal"/>
</dbReference>
<dbReference type="InterPro" id="IPR000717">
    <property type="entry name" value="PCI_dom"/>
</dbReference>
<dbReference type="PROSITE" id="PS50250">
    <property type="entry name" value="PCI"/>
    <property type="match status" value="1"/>
</dbReference>
<reference key="1">
    <citation type="journal article" date="1995" name="Yeast">
        <title>Sequence analysis of a 44 kb DNA fragment of yeast chromosome XV including the Ty1-H3 retrotransposon, the suf1(+) frameshift suppressor gene for tRNA-Gly, the yeast transfer RNA-Thr-1a and a delta element.</title>
        <authorList>
            <person name="Vandenbol M."/>
            <person name="Durand P."/>
            <person name="Portetelle D."/>
            <person name="Hilger F."/>
        </authorList>
    </citation>
    <scope>NUCLEOTIDE SEQUENCE [GENOMIC DNA]</scope>
</reference>
<reference key="2">
    <citation type="journal article" date="1997" name="Nature">
        <title>The nucleotide sequence of Saccharomyces cerevisiae chromosome XV.</title>
        <authorList>
            <person name="Dujon B."/>
            <person name="Albermann K."/>
            <person name="Aldea M."/>
            <person name="Alexandraki D."/>
            <person name="Ansorge W."/>
            <person name="Arino J."/>
            <person name="Benes V."/>
            <person name="Bohn C."/>
            <person name="Bolotin-Fukuhara M."/>
            <person name="Bordonne R."/>
            <person name="Boyer J."/>
            <person name="Camasses A."/>
            <person name="Casamayor A."/>
            <person name="Casas C."/>
            <person name="Cheret G."/>
            <person name="Cziepluch C."/>
            <person name="Daignan-Fornier B."/>
            <person name="Dang V.-D."/>
            <person name="de Haan M."/>
            <person name="Delius H."/>
            <person name="Durand P."/>
            <person name="Fairhead C."/>
            <person name="Feldmann H."/>
            <person name="Gaillon L."/>
            <person name="Galisson F."/>
            <person name="Gamo F.-J."/>
            <person name="Gancedo C."/>
            <person name="Goffeau A."/>
            <person name="Goulding S.E."/>
            <person name="Grivell L.A."/>
            <person name="Habbig B."/>
            <person name="Hand N.J."/>
            <person name="Hani J."/>
            <person name="Hattenhorst U."/>
            <person name="Hebling U."/>
            <person name="Hernando Y."/>
            <person name="Herrero E."/>
            <person name="Heumann K."/>
            <person name="Hiesel R."/>
            <person name="Hilger F."/>
            <person name="Hofmann B."/>
            <person name="Hollenberg C.P."/>
            <person name="Hughes B."/>
            <person name="Jauniaux J.-C."/>
            <person name="Kalogeropoulos A."/>
            <person name="Katsoulou C."/>
            <person name="Kordes E."/>
            <person name="Lafuente M.J."/>
            <person name="Landt O."/>
            <person name="Louis E.J."/>
            <person name="Maarse A.C."/>
            <person name="Madania A."/>
            <person name="Mannhaupt G."/>
            <person name="Marck C."/>
            <person name="Martin R.P."/>
            <person name="Mewes H.-W."/>
            <person name="Michaux G."/>
            <person name="Paces V."/>
            <person name="Parle-McDermott A.G."/>
            <person name="Pearson B.M."/>
            <person name="Perrin A."/>
            <person name="Pettersson B."/>
            <person name="Poch O."/>
            <person name="Pohl T.M."/>
            <person name="Poirey R."/>
            <person name="Portetelle D."/>
            <person name="Pujol A."/>
            <person name="Purnelle B."/>
            <person name="Ramezani Rad M."/>
            <person name="Rechmann S."/>
            <person name="Schwager C."/>
            <person name="Schweizer M."/>
            <person name="Sor F."/>
            <person name="Sterky F."/>
            <person name="Tarassov I.A."/>
            <person name="Teodoru C."/>
            <person name="Tettelin H."/>
            <person name="Thierry A."/>
            <person name="Tobiasch E."/>
            <person name="Tzermia M."/>
            <person name="Uhlen M."/>
            <person name="Unseld M."/>
            <person name="Valens M."/>
            <person name="Vandenbol M."/>
            <person name="Vetter I."/>
            <person name="Vlcek C."/>
            <person name="Voet M."/>
            <person name="Volckaert G."/>
            <person name="Voss H."/>
            <person name="Wambutt R."/>
            <person name="Wedler H."/>
            <person name="Wiemann S."/>
            <person name="Winsor B."/>
            <person name="Wolfe K.H."/>
            <person name="Zollner A."/>
            <person name="Zumstein E."/>
            <person name="Kleine K."/>
        </authorList>
    </citation>
    <scope>NUCLEOTIDE SEQUENCE [LARGE SCALE GENOMIC DNA]</scope>
    <source>
        <strain>ATCC 204508 / S288c</strain>
    </source>
</reference>
<reference key="3">
    <citation type="journal article" date="2014" name="G3 (Bethesda)">
        <title>The reference genome sequence of Saccharomyces cerevisiae: Then and now.</title>
        <authorList>
            <person name="Engel S.R."/>
            <person name="Dietrich F.S."/>
            <person name="Fisk D.G."/>
            <person name="Binkley G."/>
            <person name="Balakrishnan R."/>
            <person name="Costanzo M.C."/>
            <person name="Dwight S.S."/>
            <person name="Hitz B.C."/>
            <person name="Karra K."/>
            <person name="Nash R.S."/>
            <person name="Weng S."/>
            <person name="Wong E.D."/>
            <person name="Lloyd P."/>
            <person name="Skrzypek M.S."/>
            <person name="Miyasato S.R."/>
            <person name="Simison M."/>
            <person name="Cherry J.M."/>
        </authorList>
    </citation>
    <scope>GENOME REANNOTATION</scope>
    <source>
        <strain>ATCC 204508 / S288c</strain>
    </source>
</reference>
<reference key="4">
    <citation type="journal article" date="2002" name="BMC Genet.">
        <title>Conservation of the COP9/signalosome in budding yeast.</title>
        <authorList>
            <person name="Wee S."/>
            <person name="Hetfeld B."/>
            <person name="Dubiel W."/>
            <person name="Wolf D.A."/>
        </authorList>
    </citation>
    <scope>FUNCTION OF THE COP9 SIGNALOSOME COMPLEX</scope>
</reference>
<reference key="5">
    <citation type="journal article" date="2002" name="EMBO Rep.">
        <title>COP9 signalosome components play a role in the mating pheromone response of S. cerevisiae.</title>
        <authorList>
            <person name="Maytal-Kivity V."/>
            <person name="Piran R."/>
            <person name="Pick E."/>
            <person name="Hofmann K."/>
            <person name="Glickman M.H."/>
        </authorList>
    </citation>
    <scope>INTERACTION WITH CSN12</scope>
    <scope>IDENTIFICATION IN THE COP9 SIGNALOSOME COMPLEX</scope>
    <scope>FUNCTION OF THE COP9 SIGNALOSOME COMPLEX</scope>
</reference>
<reference key="6">
    <citation type="journal article" date="2002" name="Nature">
        <title>Functional organization of the yeast proteome by systematic analysis of protein complexes.</title>
        <authorList>
            <person name="Gavin A.-C."/>
            <person name="Boesche M."/>
            <person name="Krause R."/>
            <person name="Grandi P."/>
            <person name="Marzioch M."/>
            <person name="Bauer A."/>
            <person name="Schultz J."/>
            <person name="Rick J.M."/>
            <person name="Michon A.-M."/>
            <person name="Cruciat C.-M."/>
            <person name="Remor M."/>
            <person name="Hoefert C."/>
            <person name="Schelder M."/>
            <person name="Brajenovic M."/>
            <person name="Ruffner H."/>
            <person name="Merino A."/>
            <person name="Klein K."/>
            <person name="Hudak M."/>
            <person name="Dickson D."/>
            <person name="Rudi T."/>
            <person name="Gnau V."/>
            <person name="Bauch A."/>
            <person name="Bastuck S."/>
            <person name="Huhse B."/>
            <person name="Leutwein C."/>
            <person name="Heurtier M.-A."/>
            <person name="Copley R.R."/>
            <person name="Edelmann A."/>
            <person name="Querfurth E."/>
            <person name="Rybin V."/>
            <person name="Drewes G."/>
            <person name="Raida M."/>
            <person name="Bouwmeester T."/>
            <person name="Bork P."/>
            <person name="Seraphin B."/>
            <person name="Kuster B."/>
            <person name="Neubauer G."/>
            <person name="Superti-Furga G."/>
        </authorList>
    </citation>
    <scope>INTERACTION WITH RRI1/CSN5</scope>
    <scope>IDENTIFICATION BY MASS SPECTROMETRY</scope>
</reference>
<reference key="7">
    <citation type="journal article" date="2003" name="Int. J. Biochem. Cell Biol.">
        <title>The COP9 signalosome-like complex in S. cerevisiae and links to other PCI complexes.</title>
        <authorList>
            <person name="Maytal-Kivity V."/>
            <person name="Pick E."/>
            <person name="Piran R."/>
            <person name="Hofmann K."/>
            <person name="Glickman M.H."/>
        </authorList>
    </citation>
    <scope>INTERACTION WITH CSN12</scope>
    <scope>IDENTIFICATION IN THE COP9 SIGNALOSOME COMPLEX</scope>
</reference>
<reference key="8">
    <citation type="journal article" date="2003" name="Nature">
        <title>Global analysis of protein localization in budding yeast.</title>
        <authorList>
            <person name="Huh W.-K."/>
            <person name="Falvo J.V."/>
            <person name="Gerke L.C."/>
            <person name="Carroll A.S."/>
            <person name="Howson R.W."/>
            <person name="Weissman J.S."/>
            <person name="O'Shea E.K."/>
        </authorList>
    </citation>
    <scope>SUBCELLULAR LOCATION [LARGE SCALE ANALYSIS]</scope>
</reference>
<reference key="9">
    <citation type="journal article" date="2003" name="Nature">
        <title>Global analysis of protein expression in yeast.</title>
        <authorList>
            <person name="Ghaemmaghami S."/>
            <person name="Huh W.-K."/>
            <person name="Bower K."/>
            <person name="Howson R.W."/>
            <person name="Belle A."/>
            <person name="Dephoure N."/>
            <person name="O'Shea E.K."/>
            <person name="Weissman J.S."/>
        </authorList>
    </citation>
    <scope>LEVEL OF PROTEIN EXPRESSION [LARGE SCALE ANALYSIS]</scope>
</reference>
<name>CSN10_YEAST</name>
<evidence type="ECO:0000255" key="1">
    <source>
        <dbReference type="PROSITE-ProRule" id="PRU01185"/>
    </source>
</evidence>
<evidence type="ECO:0000256" key="2">
    <source>
        <dbReference type="SAM" id="MobiDB-lite"/>
    </source>
</evidence>
<evidence type="ECO:0000269" key="3">
    <source>
    </source>
</evidence>
<evidence type="ECO:0000269" key="4">
    <source>
    </source>
</evidence>
<evidence type="ECO:0000269" key="5">
    <source>
    </source>
</evidence>
<evidence type="ECO:0000269" key="6">
    <source>
    </source>
</evidence>
<evidence type="ECO:0000269" key="7">
    <source>
    </source>
</evidence>
<evidence type="ECO:0000305" key="8">
    <source>
    </source>
</evidence>
<feature type="chain" id="PRO_0000121024" description="COP9 signalosome complex subunit 10">
    <location>
        <begin position="1"/>
        <end position="645"/>
    </location>
</feature>
<feature type="domain" description="PCI" evidence="1">
    <location>
        <begin position="348"/>
        <end position="543"/>
    </location>
</feature>
<feature type="region of interest" description="Disordered" evidence="2">
    <location>
        <begin position="1"/>
        <end position="63"/>
    </location>
</feature>
<feature type="compositionally biased region" description="Acidic residues" evidence="2">
    <location>
        <begin position="1"/>
        <end position="45"/>
    </location>
</feature>
<feature type="compositionally biased region" description="Basic and acidic residues" evidence="2">
    <location>
        <begin position="46"/>
        <end position="63"/>
    </location>
</feature>
<gene>
    <name type="primary">RRI2</name>
    <name type="synonym">CSN10</name>
    <name type="ordered locus">YOL117W</name>
</gene>
<organism>
    <name type="scientific">Saccharomyces cerevisiae (strain ATCC 204508 / S288c)</name>
    <name type="common">Baker's yeast</name>
    <dbReference type="NCBI Taxonomy" id="559292"/>
    <lineage>
        <taxon>Eukaryota</taxon>
        <taxon>Fungi</taxon>
        <taxon>Dikarya</taxon>
        <taxon>Ascomycota</taxon>
        <taxon>Saccharomycotina</taxon>
        <taxon>Saccharomycetes</taxon>
        <taxon>Saccharomycetales</taxon>
        <taxon>Saccharomycetaceae</taxon>
        <taxon>Saccharomyces</taxon>
    </lineage>
</organism>
<protein>
    <recommendedName>
        <fullName>COP9 signalosome complex subunit 10</fullName>
    </recommendedName>
</protein>
<accession>Q12348</accession>
<accession>D6W1V0</accession>
<keyword id="KW-0963">Cytoplasm</keyword>
<keyword id="KW-0539">Nucleus</keyword>
<keyword id="KW-1185">Reference proteome</keyword>
<keyword id="KW-0736">Signalosome</keyword>
<comment type="function">
    <text evidence="4 5">Component of the COP9 signalosome (CSN) complex that acts as an regulator of the ubiquitin (Ubl) conjugation pathway by mediating the deneddylation of the cullin subunit of SCF-type E3 ubiquitin-protein ligase complexes. The CSN complex is involved in the regulation of the mating pheromone response.</text>
</comment>
<comment type="subunit">
    <text evidence="3 5 6">Component of a COP9 signalosome-like (CSN) complex, composed of at least RRI1/CSN5, CSN9, RRI2/CSN10, PCI8/CSN11, CSN12 and CSI1. In the complex, it probably interacts directly with CSN12.</text>
</comment>
<comment type="subcellular location">
    <subcellularLocation>
        <location evidence="8">Cytoplasm</location>
    </subcellularLocation>
    <subcellularLocation>
        <location evidence="8">Nucleus</location>
    </subcellularLocation>
</comment>
<comment type="miscellaneous">
    <text evidence="7">Present with 1320 molecules/cell in log phase SD medium.</text>
</comment>
<proteinExistence type="evidence at protein level"/>